<comment type="function">
    <text evidence="1">Catalyzes the attachment of alanine to tRNA(Ala) in a two-step reaction: alanine is first activated by ATP to form Ala-AMP and then transferred to the acceptor end of tRNA(Ala). Also edits incorrectly charged Ser-tRNA(Ala) and Gly-tRNA(Ala) via its editing domain.</text>
</comment>
<comment type="catalytic activity">
    <reaction evidence="1">
        <text>tRNA(Ala) + L-alanine + ATP = L-alanyl-tRNA(Ala) + AMP + diphosphate</text>
        <dbReference type="Rhea" id="RHEA:12540"/>
        <dbReference type="Rhea" id="RHEA-COMP:9657"/>
        <dbReference type="Rhea" id="RHEA-COMP:9923"/>
        <dbReference type="ChEBI" id="CHEBI:30616"/>
        <dbReference type="ChEBI" id="CHEBI:33019"/>
        <dbReference type="ChEBI" id="CHEBI:57972"/>
        <dbReference type="ChEBI" id="CHEBI:78442"/>
        <dbReference type="ChEBI" id="CHEBI:78497"/>
        <dbReference type="ChEBI" id="CHEBI:456215"/>
        <dbReference type="EC" id="6.1.1.7"/>
    </reaction>
</comment>
<comment type="cofactor">
    <cofactor evidence="1">
        <name>Zn(2+)</name>
        <dbReference type="ChEBI" id="CHEBI:29105"/>
    </cofactor>
    <text evidence="1">Binds 1 zinc ion per subunit.</text>
</comment>
<comment type="subcellular location">
    <subcellularLocation>
        <location evidence="1">Cytoplasm</location>
    </subcellularLocation>
</comment>
<comment type="domain">
    <text evidence="1">Consists of three domains; the N-terminal catalytic domain, the editing domain and the C-terminal C-Ala domain. The editing domain removes incorrectly charged amino acids, while the C-Ala domain, along with tRNA(Ala), serves as a bridge to cooperatively bring together the editing and aminoacylation centers thus stimulating deacylation of misacylated tRNAs.</text>
</comment>
<comment type="similarity">
    <text evidence="1">Belongs to the class-II aminoacyl-tRNA synthetase family.</text>
</comment>
<sequence length="874" mass="96039">MKTSELRQKFLKFFETKGHTVVRSSSLVPHDDPTLLFTNAGMNQFKDVFLGFDKRPYSRATTAQKCVRAGGKHNDLENVGYTARHHTFFEMMGNFSFGDYFKRDAIHFAWEFLTSPEWLNIPKDKLLATVYAEDDEAYNIWLNEIGMPSERIVRIGDNKGAKYASDNFWQMGDTGPCGPCSEIFYDHGEEIWGGIPGSPEEDGDRWIEIWNCVFMQFNRDEQGNMNPLPKPSVDTGMGLERMAAVMQHVHSNYEIDLFQDLLKAVARETGAAFSMEEPSLKVIADHIRSCSFLIADGVLPSNEGRGYVLRRIIRRAVRHGYKLGQSKPFFHKLVADLVKEMGDAYPELKEKQVQIEEALKNEESRFAQTLETGMALLENALAKGSKKLDGEIIFKLYDTYGFPYDLTADICRERNIELDEAGFEREMEAQRARARAAQSFKANAQLPYDGQDTEFKGYSERQTESKVLALYKDGEQVDELNEGDSGAVVIDFTPFYAESGGQVGDVGYIFSGENRFEVRDTQKIKAAVFGQFGVQTSGRLKVGDSVTAKVDDEIRNANMRNHSATHLMHKALRDVLGRHVEQKGSLVTAESTRFDISHPQAVTAEEIAEVERRVNEAVLANVAVNAAIMSMEDAQKTGAMMLFGEKYGDEVRVLQMGGFSTELCGGTHVSRTGDIGLFKIISEGGIAAGVRRIEAITGLNALKWAQEQERLVKDIIAETKAQTEKDVLAKIQAGAAHAKALEKELARAKAELAVHAGAKLLDDAKDLGAAKLVAAQIEADAAALREIVTDLTGKSDNAVILLAAVNDGKVSLCAGVSKALTGKVKAGDLVKFAAEQVGGKGGGRPDLAQAGGTDAGKLPAVLDSVKDWVGAKLV</sequence>
<protein>
    <recommendedName>
        <fullName evidence="1">Alanine--tRNA ligase</fullName>
        <ecNumber evidence="1">6.1.1.7</ecNumber>
    </recommendedName>
    <alternativeName>
        <fullName evidence="1">Alanyl-tRNA synthetase</fullName>
        <shortName evidence="1">AlaRS</shortName>
    </alternativeName>
</protein>
<feature type="chain" id="PRO_0000347695" description="Alanine--tRNA ligase">
    <location>
        <begin position="1"/>
        <end position="874"/>
    </location>
</feature>
<feature type="binding site" evidence="1">
    <location>
        <position position="562"/>
    </location>
    <ligand>
        <name>Zn(2+)</name>
        <dbReference type="ChEBI" id="CHEBI:29105"/>
    </ligand>
</feature>
<feature type="binding site" evidence="1">
    <location>
        <position position="566"/>
    </location>
    <ligand>
        <name>Zn(2+)</name>
        <dbReference type="ChEBI" id="CHEBI:29105"/>
    </ligand>
</feature>
<feature type="binding site" evidence="1">
    <location>
        <position position="664"/>
    </location>
    <ligand>
        <name>Zn(2+)</name>
        <dbReference type="ChEBI" id="CHEBI:29105"/>
    </ligand>
</feature>
<feature type="binding site" evidence="1">
    <location>
        <position position="668"/>
    </location>
    <ligand>
        <name>Zn(2+)</name>
        <dbReference type="ChEBI" id="CHEBI:29105"/>
    </ligand>
</feature>
<accession>A1KV20</accession>
<dbReference type="EC" id="6.1.1.7" evidence="1"/>
<dbReference type="EMBL" id="AM421808">
    <property type="protein sequence ID" value="CAM10719.1"/>
    <property type="molecule type" value="Genomic_DNA"/>
</dbReference>
<dbReference type="RefSeq" id="WP_002224406.1">
    <property type="nucleotide sequence ID" value="NC_008767.1"/>
</dbReference>
<dbReference type="SMR" id="A1KV20"/>
<dbReference type="KEGG" id="nmc:NMC1518"/>
<dbReference type="HOGENOM" id="CLU_004485_1_1_4"/>
<dbReference type="Proteomes" id="UP000002286">
    <property type="component" value="Chromosome"/>
</dbReference>
<dbReference type="GO" id="GO:0005829">
    <property type="term" value="C:cytosol"/>
    <property type="evidence" value="ECO:0007669"/>
    <property type="project" value="TreeGrafter"/>
</dbReference>
<dbReference type="GO" id="GO:0004813">
    <property type="term" value="F:alanine-tRNA ligase activity"/>
    <property type="evidence" value="ECO:0007669"/>
    <property type="project" value="UniProtKB-UniRule"/>
</dbReference>
<dbReference type="GO" id="GO:0002161">
    <property type="term" value="F:aminoacyl-tRNA deacylase activity"/>
    <property type="evidence" value="ECO:0007669"/>
    <property type="project" value="TreeGrafter"/>
</dbReference>
<dbReference type="GO" id="GO:0005524">
    <property type="term" value="F:ATP binding"/>
    <property type="evidence" value="ECO:0007669"/>
    <property type="project" value="UniProtKB-UniRule"/>
</dbReference>
<dbReference type="GO" id="GO:0000049">
    <property type="term" value="F:tRNA binding"/>
    <property type="evidence" value="ECO:0007669"/>
    <property type="project" value="UniProtKB-KW"/>
</dbReference>
<dbReference type="GO" id="GO:0008270">
    <property type="term" value="F:zinc ion binding"/>
    <property type="evidence" value="ECO:0007669"/>
    <property type="project" value="UniProtKB-UniRule"/>
</dbReference>
<dbReference type="GO" id="GO:0006419">
    <property type="term" value="P:alanyl-tRNA aminoacylation"/>
    <property type="evidence" value="ECO:0007669"/>
    <property type="project" value="UniProtKB-UniRule"/>
</dbReference>
<dbReference type="GO" id="GO:0045892">
    <property type="term" value="P:negative regulation of DNA-templated transcription"/>
    <property type="evidence" value="ECO:0007669"/>
    <property type="project" value="TreeGrafter"/>
</dbReference>
<dbReference type="CDD" id="cd00673">
    <property type="entry name" value="AlaRS_core"/>
    <property type="match status" value="1"/>
</dbReference>
<dbReference type="FunFam" id="2.40.30.130:FF:000001">
    <property type="entry name" value="Alanine--tRNA ligase"/>
    <property type="match status" value="1"/>
</dbReference>
<dbReference type="FunFam" id="3.10.310.40:FF:000001">
    <property type="entry name" value="Alanine--tRNA ligase"/>
    <property type="match status" value="1"/>
</dbReference>
<dbReference type="FunFam" id="3.30.54.20:FF:000001">
    <property type="entry name" value="Alanine--tRNA ligase"/>
    <property type="match status" value="1"/>
</dbReference>
<dbReference type="FunFam" id="3.30.930.10:FF:000004">
    <property type="entry name" value="Alanine--tRNA ligase"/>
    <property type="match status" value="1"/>
</dbReference>
<dbReference type="FunFam" id="3.30.980.10:FF:000004">
    <property type="entry name" value="Alanine--tRNA ligase, cytoplasmic"/>
    <property type="match status" value="1"/>
</dbReference>
<dbReference type="Gene3D" id="2.40.30.130">
    <property type="match status" value="1"/>
</dbReference>
<dbReference type="Gene3D" id="3.10.310.40">
    <property type="match status" value="1"/>
</dbReference>
<dbReference type="Gene3D" id="3.30.54.20">
    <property type="match status" value="1"/>
</dbReference>
<dbReference type="Gene3D" id="3.30.930.10">
    <property type="entry name" value="Bira Bifunctional Protein, Domain 2"/>
    <property type="match status" value="1"/>
</dbReference>
<dbReference type="Gene3D" id="3.30.980.10">
    <property type="entry name" value="Threonyl-trna Synthetase, Chain A, domain 2"/>
    <property type="match status" value="1"/>
</dbReference>
<dbReference type="HAMAP" id="MF_00036_B">
    <property type="entry name" value="Ala_tRNA_synth_B"/>
    <property type="match status" value="1"/>
</dbReference>
<dbReference type="InterPro" id="IPR045864">
    <property type="entry name" value="aa-tRNA-synth_II/BPL/LPL"/>
</dbReference>
<dbReference type="InterPro" id="IPR002318">
    <property type="entry name" value="Ala-tRNA-lgiase_IIc"/>
</dbReference>
<dbReference type="InterPro" id="IPR018162">
    <property type="entry name" value="Ala-tRNA-ligase_IIc_anticod-bd"/>
</dbReference>
<dbReference type="InterPro" id="IPR018165">
    <property type="entry name" value="Ala-tRNA-synth_IIc_core"/>
</dbReference>
<dbReference type="InterPro" id="IPR018164">
    <property type="entry name" value="Ala-tRNA-synth_IIc_N"/>
</dbReference>
<dbReference type="InterPro" id="IPR050058">
    <property type="entry name" value="Ala-tRNA_ligase"/>
</dbReference>
<dbReference type="InterPro" id="IPR023033">
    <property type="entry name" value="Ala_tRNA_ligase_euk/bac"/>
</dbReference>
<dbReference type="InterPro" id="IPR003156">
    <property type="entry name" value="DHHA1_dom"/>
</dbReference>
<dbReference type="InterPro" id="IPR018163">
    <property type="entry name" value="Thr/Ala-tRNA-synth_IIc_edit"/>
</dbReference>
<dbReference type="InterPro" id="IPR009000">
    <property type="entry name" value="Transl_B-barrel_sf"/>
</dbReference>
<dbReference type="InterPro" id="IPR012947">
    <property type="entry name" value="tRNA_SAD"/>
</dbReference>
<dbReference type="NCBIfam" id="TIGR00344">
    <property type="entry name" value="alaS"/>
    <property type="match status" value="1"/>
</dbReference>
<dbReference type="PANTHER" id="PTHR11777:SF9">
    <property type="entry name" value="ALANINE--TRNA LIGASE, CYTOPLASMIC"/>
    <property type="match status" value="1"/>
</dbReference>
<dbReference type="PANTHER" id="PTHR11777">
    <property type="entry name" value="ALANYL-TRNA SYNTHETASE"/>
    <property type="match status" value="1"/>
</dbReference>
<dbReference type="Pfam" id="PF02272">
    <property type="entry name" value="DHHA1"/>
    <property type="match status" value="1"/>
</dbReference>
<dbReference type="Pfam" id="PF01411">
    <property type="entry name" value="tRNA-synt_2c"/>
    <property type="match status" value="1"/>
</dbReference>
<dbReference type="Pfam" id="PF07973">
    <property type="entry name" value="tRNA_SAD"/>
    <property type="match status" value="1"/>
</dbReference>
<dbReference type="PRINTS" id="PR00980">
    <property type="entry name" value="TRNASYNTHALA"/>
</dbReference>
<dbReference type="SMART" id="SM00863">
    <property type="entry name" value="tRNA_SAD"/>
    <property type="match status" value="1"/>
</dbReference>
<dbReference type="SUPFAM" id="SSF55681">
    <property type="entry name" value="Class II aaRS and biotin synthetases"/>
    <property type="match status" value="1"/>
</dbReference>
<dbReference type="SUPFAM" id="SSF101353">
    <property type="entry name" value="Putative anticodon-binding domain of alanyl-tRNA synthetase (AlaRS)"/>
    <property type="match status" value="1"/>
</dbReference>
<dbReference type="SUPFAM" id="SSF55186">
    <property type="entry name" value="ThrRS/AlaRS common domain"/>
    <property type="match status" value="1"/>
</dbReference>
<dbReference type="SUPFAM" id="SSF50447">
    <property type="entry name" value="Translation proteins"/>
    <property type="match status" value="1"/>
</dbReference>
<dbReference type="PROSITE" id="PS50860">
    <property type="entry name" value="AA_TRNA_LIGASE_II_ALA"/>
    <property type="match status" value="1"/>
</dbReference>
<organism>
    <name type="scientific">Neisseria meningitidis serogroup C / serotype 2a (strain ATCC 700532 / DSM 15464 / FAM18)</name>
    <dbReference type="NCBI Taxonomy" id="272831"/>
    <lineage>
        <taxon>Bacteria</taxon>
        <taxon>Pseudomonadati</taxon>
        <taxon>Pseudomonadota</taxon>
        <taxon>Betaproteobacteria</taxon>
        <taxon>Neisseriales</taxon>
        <taxon>Neisseriaceae</taxon>
        <taxon>Neisseria</taxon>
    </lineage>
</organism>
<evidence type="ECO:0000255" key="1">
    <source>
        <dbReference type="HAMAP-Rule" id="MF_00036"/>
    </source>
</evidence>
<name>SYA_NEIMF</name>
<reference key="1">
    <citation type="journal article" date="2007" name="PLoS Genet.">
        <title>Meningococcal genetic variation mechanisms viewed through comparative analysis of serogroup C strain FAM18.</title>
        <authorList>
            <person name="Bentley S.D."/>
            <person name="Vernikos G.S."/>
            <person name="Snyder L.A.S."/>
            <person name="Churcher C."/>
            <person name="Arrowsmith C."/>
            <person name="Chillingworth T."/>
            <person name="Cronin A."/>
            <person name="Davis P.H."/>
            <person name="Holroyd N.E."/>
            <person name="Jagels K."/>
            <person name="Maddison M."/>
            <person name="Moule S."/>
            <person name="Rabbinowitsch E."/>
            <person name="Sharp S."/>
            <person name="Unwin L."/>
            <person name="Whitehead S."/>
            <person name="Quail M.A."/>
            <person name="Achtman M."/>
            <person name="Barrell B.G."/>
            <person name="Saunders N.J."/>
            <person name="Parkhill J."/>
        </authorList>
    </citation>
    <scope>NUCLEOTIDE SEQUENCE [LARGE SCALE GENOMIC DNA]</scope>
    <source>
        <strain>ATCC 700532 / DSM 15464 / FAM18</strain>
    </source>
</reference>
<keyword id="KW-0030">Aminoacyl-tRNA synthetase</keyword>
<keyword id="KW-0067">ATP-binding</keyword>
<keyword id="KW-0963">Cytoplasm</keyword>
<keyword id="KW-0436">Ligase</keyword>
<keyword id="KW-0479">Metal-binding</keyword>
<keyword id="KW-0547">Nucleotide-binding</keyword>
<keyword id="KW-0648">Protein biosynthesis</keyword>
<keyword id="KW-0694">RNA-binding</keyword>
<keyword id="KW-0820">tRNA-binding</keyword>
<keyword id="KW-0862">Zinc</keyword>
<gene>
    <name evidence="1" type="primary">alaS</name>
    <name type="ordered locus">NMC1518</name>
</gene>
<proteinExistence type="inferred from homology"/>